<proteinExistence type="inferred from homology"/>
<sequence length="507" mass="55981">MRLNPGEIVRVLETKISDYKEEIRLEDTGKVIQVGDGIARVYGLNNVMANEMVEFVETGTKGLAFNLEEDNVGIIILGDYKDIKEGHTVRRLNRIMEVPVGEGLLGRVVNPLGEPLDGLGPVEYKETRPIEFKAPGVIFRKPVDTPLQTGLKVVDSLIPIGRGQRELIIGDRQTGKTAIAIDTIINQKGKGVYCIYVAIGQKASAVARIVEKLRQTGAMEYTTVVVAASSDPATLQYIAPYAGCAMGEYFMFNGKDALVVYDDLSKHAVAYRQISLLLRRPPGREAYPGDVFYLHSRLLERAARLNEKYGGGSLTALPIIETQANDISAYIPTNVISITDGQIYLEPGLFYAGQRPAVNIGLSVSRVGGAAQIKAMKQVAGSLKLDLAQFQELETFAQFATELDPATQAQITRGQRLMELMKQPQYSPMEVEDQVVVLFAGINGYLDDLPINAVKAFEEGLLKFVKEKYSSLLDEIRTTKQLSKENETKLHAVIKEFKEEFVKLYGK</sequence>
<reference key="1">
    <citation type="submission" date="2007-07" db="EMBL/GenBank/DDBJ databases">
        <title>Complete sequence of Fervidobacterium nodosum Rt17-B1.</title>
        <authorList>
            <consortium name="US DOE Joint Genome Institute"/>
            <person name="Copeland A."/>
            <person name="Lucas S."/>
            <person name="Lapidus A."/>
            <person name="Barry K."/>
            <person name="Glavina del Rio T."/>
            <person name="Dalin E."/>
            <person name="Tice H."/>
            <person name="Pitluck S."/>
            <person name="Saunders E."/>
            <person name="Brettin T."/>
            <person name="Bruce D."/>
            <person name="Detter J.C."/>
            <person name="Han C."/>
            <person name="Schmutz J."/>
            <person name="Larimer F."/>
            <person name="Land M."/>
            <person name="Hauser L."/>
            <person name="Kyrpides N."/>
            <person name="Mikhailova N."/>
            <person name="Nelson K."/>
            <person name="Gogarten J.P."/>
            <person name="Noll K."/>
            <person name="Richardson P."/>
        </authorList>
    </citation>
    <scope>NUCLEOTIDE SEQUENCE [LARGE SCALE GENOMIC DNA]</scope>
    <source>
        <strain>ATCC 35602 / DSM 5306 / Rt17-B1</strain>
    </source>
</reference>
<gene>
    <name evidence="1" type="primary">atpA</name>
    <name type="ordered locus">Fnod_0327</name>
</gene>
<organism>
    <name type="scientific">Fervidobacterium nodosum (strain ATCC 35602 / DSM 5306 / Rt17-B1)</name>
    <dbReference type="NCBI Taxonomy" id="381764"/>
    <lineage>
        <taxon>Bacteria</taxon>
        <taxon>Thermotogati</taxon>
        <taxon>Thermotogota</taxon>
        <taxon>Thermotogae</taxon>
        <taxon>Thermotogales</taxon>
        <taxon>Fervidobacteriaceae</taxon>
        <taxon>Fervidobacterium</taxon>
    </lineage>
</organism>
<feature type="chain" id="PRO_1000073353" description="ATP synthase subunit alpha">
    <location>
        <begin position="1"/>
        <end position="507"/>
    </location>
</feature>
<feature type="binding site" evidence="1">
    <location>
        <begin position="170"/>
        <end position="177"/>
    </location>
    <ligand>
        <name>ATP</name>
        <dbReference type="ChEBI" id="CHEBI:30616"/>
    </ligand>
</feature>
<feature type="site" description="Required for activity" evidence="1">
    <location>
        <position position="363"/>
    </location>
</feature>
<accession>A7HJV9</accession>
<comment type="function">
    <text evidence="1">Produces ATP from ADP in the presence of a proton gradient across the membrane. The alpha chain is a regulatory subunit.</text>
</comment>
<comment type="catalytic activity">
    <reaction evidence="1">
        <text>ATP + H2O + 4 H(+)(in) = ADP + phosphate + 5 H(+)(out)</text>
        <dbReference type="Rhea" id="RHEA:57720"/>
        <dbReference type="ChEBI" id="CHEBI:15377"/>
        <dbReference type="ChEBI" id="CHEBI:15378"/>
        <dbReference type="ChEBI" id="CHEBI:30616"/>
        <dbReference type="ChEBI" id="CHEBI:43474"/>
        <dbReference type="ChEBI" id="CHEBI:456216"/>
        <dbReference type="EC" id="7.1.2.2"/>
    </reaction>
</comment>
<comment type="subunit">
    <text evidence="1">F-type ATPases have 2 components, CF(1) - the catalytic core - and CF(0) - the membrane proton channel. CF(1) has five subunits: alpha(3), beta(3), gamma(1), delta(1), epsilon(1). CF(0) has three main subunits: a(1), b(2) and c(9-12). The alpha and beta chains form an alternating ring which encloses part of the gamma chain. CF(1) is attached to CF(0) by a central stalk formed by the gamma and epsilon chains, while a peripheral stalk is formed by the delta and b chains.</text>
</comment>
<comment type="subcellular location">
    <subcellularLocation>
        <location evidence="1">Cell inner membrane</location>
        <topology evidence="1">Peripheral membrane protein</topology>
    </subcellularLocation>
</comment>
<comment type="similarity">
    <text evidence="1">Belongs to the ATPase alpha/beta chains family.</text>
</comment>
<protein>
    <recommendedName>
        <fullName evidence="1">ATP synthase subunit alpha</fullName>
        <ecNumber evidence="1">7.1.2.2</ecNumber>
    </recommendedName>
    <alternativeName>
        <fullName evidence="1">ATP synthase F1 sector subunit alpha</fullName>
    </alternativeName>
    <alternativeName>
        <fullName evidence="1">F-ATPase subunit alpha</fullName>
    </alternativeName>
</protein>
<evidence type="ECO:0000255" key="1">
    <source>
        <dbReference type="HAMAP-Rule" id="MF_01346"/>
    </source>
</evidence>
<dbReference type="EC" id="7.1.2.2" evidence="1"/>
<dbReference type="EMBL" id="CP000771">
    <property type="protein sequence ID" value="ABS60192.1"/>
    <property type="molecule type" value="Genomic_DNA"/>
</dbReference>
<dbReference type="RefSeq" id="WP_011993513.1">
    <property type="nucleotide sequence ID" value="NC_009718.1"/>
</dbReference>
<dbReference type="SMR" id="A7HJV9"/>
<dbReference type="STRING" id="381764.Fnod_0327"/>
<dbReference type="KEGG" id="fno:Fnod_0327"/>
<dbReference type="eggNOG" id="COG0056">
    <property type="taxonomic scope" value="Bacteria"/>
</dbReference>
<dbReference type="HOGENOM" id="CLU_010091_2_1_0"/>
<dbReference type="OrthoDB" id="9803053at2"/>
<dbReference type="Proteomes" id="UP000002415">
    <property type="component" value="Chromosome"/>
</dbReference>
<dbReference type="GO" id="GO:0005886">
    <property type="term" value="C:plasma membrane"/>
    <property type="evidence" value="ECO:0007669"/>
    <property type="project" value="UniProtKB-SubCell"/>
</dbReference>
<dbReference type="GO" id="GO:0045259">
    <property type="term" value="C:proton-transporting ATP synthase complex"/>
    <property type="evidence" value="ECO:0007669"/>
    <property type="project" value="UniProtKB-KW"/>
</dbReference>
<dbReference type="GO" id="GO:0043531">
    <property type="term" value="F:ADP binding"/>
    <property type="evidence" value="ECO:0007669"/>
    <property type="project" value="TreeGrafter"/>
</dbReference>
<dbReference type="GO" id="GO:0005524">
    <property type="term" value="F:ATP binding"/>
    <property type="evidence" value="ECO:0007669"/>
    <property type="project" value="UniProtKB-UniRule"/>
</dbReference>
<dbReference type="GO" id="GO:0046933">
    <property type="term" value="F:proton-transporting ATP synthase activity, rotational mechanism"/>
    <property type="evidence" value="ECO:0007669"/>
    <property type="project" value="UniProtKB-UniRule"/>
</dbReference>
<dbReference type="CDD" id="cd18113">
    <property type="entry name" value="ATP-synt_F1_alpha_C"/>
    <property type="match status" value="1"/>
</dbReference>
<dbReference type="CDD" id="cd18116">
    <property type="entry name" value="ATP-synt_F1_alpha_N"/>
    <property type="match status" value="1"/>
</dbReference>
<dbReference type="CDD" id="cd01132">
    <property type="entry name" value="F1-ATPase_alpha_CD"/>
    <property type="match status" value="1"/>
</dbReference>
<dbReference type="FunFam" id="1.20.150.20:FF:000001">
    <property type="entry name" value="ATP synthase subunit alpha"/>
    <property type="match status" value="1"/>
</dbReference>
<dbReference type="FunFam" id="2.40.30.20:FF:000001">
    <property type="entry name" value="ATP synthase subunit alpha"/>
    <property type="match status" value="1"/>
</dbReference>
<dbReference type="FunFam" id="3.40.50.300:FF:000002">
    <property type="entry name" value="ATP synthase subunit alpha"/>
    <property type="match status" value="1"/>
</dbReference>
<dbReference type="Gene3D" id="2.40.30.20">
    <property type="match status" value="1"/>
</dbReference>
<dbReference type="Gene3D" id="1.20.150.20">
    <property type="entry name" value="ATP synthase alpha/beta chain, C-terminal domain"/>
    <property type="match status" value="1"/>
</dbReference>
<dbReference type="Gene3D" id="3.40.50.300">
    <property type="entry name" value="P-loop containing nucleotide triphosphate hydrolases"/>
    <property type="match status" value="1"/>
</dbReference>
<dbReference type="HAMAP" id="MF_01346">
    <property type="entry name" value="ATP_synth_alpha_bact"/>
    <property type="match status" value="1"/>
</dbReference>
<dbReference type="InterPro" id="IPR023366">
    <property type="entry name" value="ATP_synth_asu-like_sf"/>
</dbReference>
<dbReference type="InterPro" id="IPR000793">
    <property type="entry name" value="ATP_synth_asu_C"/>
</dbReference>
<dbReference type="InterPro" id="IPR038376">
    <property type="entry name" value="ATP_synth_asu_C_sf"/>
</dbReference>
<dbReference type="InterPro" id="IPR033732">
    <property type="entry name" value="ATP_synth_F1_a_nt-bd_dom"/>
</dbReference>
<dbReference type="InterPro" id="IPR005294">
    <property type="entry name" value="ATP_synth_F1_asu"/>
</dbReference>
<dbReference type="InterPro" id="IPR020003">
    <property type="entry name" value="ATPase_a/bsu_AS"/>
</dbReference>
<dbReference type="InterPro" id="IPR004100">
    <property type="entry name" value="ATPase_F1/V1/A1_a/bsu_N"/>
</dbReference>
<dbReference type="InterPro" id="IPR036121">
    <property type="entry name" value="ATPase_F1/V1/A1_a/bsu_N_sf"/>
</dbReference>
<dbReference type="InterPro" id="IPR000194">
    <property type="entry name" value="ATPase_F1/V1/A1_a/bsu_nucl-bd"/>
</dbReference>
<dbReference type="InterPro" id="IPR027417">
    <property type="entry name" value="P-loop_NTPase"/>
</dbReference>
<dbReference type="NCBIfam" id="TIGR00962">
    <property type="entry name" value="atpA"/>
    <property type="match status" value="1"/>
</dbReference>
<dbReference type="NCBIfam" id="NF009884">
    <property type="entry name" value="PRK13343.1"/>
    <property type="match status" value="1"/>
</dbReference>
<dbReference type="PANTHER" id="PTHR48082">
    <property type="entry name" value="ATP SYNTHASE SUBUNIT ALPHA, MITOCHONDRIAL"/>
    <property type="match status" value="1"/>
</dbReference>
<dbReference type="PANTHER" id="PTHR48082:SF2">
    <property type="entry name" value="ATP SYNTHASE SUBUNIT ALPHA, MITOCHONDRIAL"/>
    <property type="match status" value="1"/>
</dbReference>
<dbReference type="Pfam" id="PF00006">
    <property type="entry name" value="ATP-synt_ab"/>
    <property type="match status" value="1"/>
</dbReference>
<dbReference type="Pfam" id="PF00306">
    <property type="entry name" value="ATP-synt_ab_C"/>
    <property type="match status" value="1"/>
</dbReference>
<dbReference type="Pfam" id="PF02874">
    <property type="entry name" value="ATP-synt_ab_N"/>
    <property type="match status" value="1"/>
</dbReference>
<dbReference type="PIRSF" id="PIRSF039088">
    <property type="entry name" value="F_ATPase_subunit_alpha"/>
    <property type="match status" value="1"/>
</dbReference>
<dbReference type="SUPFAM" id="SSF47917">
    <property type="entry name" value="C-terminal domain of alpha and beta subunits of F1 ATP synthase"/>
    <property type="match status" value="1"/>
</dbReference>
<dbReference type="SUPFAM" id="SSF50615">
    <property type="entry name" value="N-terminal domain of alpha and beta subunits of F1 ATP synthase"/>
    <property type="match status" value="1"/>
</dbReference>
<dbReference type="SUPFAM" id="SSF52540">
    <property type="entry name" value="P-loop containing nucleoside triphosphate hydrolases"/>
    <property type="match status" value="1"/>
</dbReference>
<dbReference type="PROSITE" id="PS00152">
    <property type="entry name" value="ATPASE_ALPHA_BETA"/>
    <property type="match status" value="1"/>
</dbReference>
<name>ATPA_FERNB</name>
<keyword id="KW-0066">ATP synthesis</keyword>
<keyword id="KW-0067">ATP-binding</keyword>
<keyword id="KW-0997">Cell inner membrane</keyword>
<keyword id="KW-1003">Cell membrane</keyword>
<keyword id="KW-0139">CF(1)</keyword>
<keyword id="KW-0375">Hydrogen ion transport</keyword>
<keyword id="KW-0406">Ion transport</keyword>
<keyword id="KW-0472">Membrane</keyword>
<keyword id="KW-0547">Nucleotide-binding</keyword>
<keyword id="KW-1185">Reference proteome</keyword>
<keyword id="KW-1278">Translocase</keyword>
<keyword id="KW-0813">Transport</keyword>